<name>ECTD_STRAW</name>
<keyword id="KW-0223">Dioxygenase</keyword>
<keyword id="KW-0408">Iron</keyword>
<keyword id="KW-0479">Metal-binding</keyword>
<keyword id="KW-0560">Oxidoreductase</keyword>
<keyword id="KW-1185">Reference proteome</keyword>
<comment type="function">
    <text evidence="3">Involved in the biosynthesis of 5-hydroxyectoine, called compatible solute, which helps organisms to survive extreme osmotic stress by acting as a highly soluble organic osmolyte. Catalyzes the 2-oxoglutarate-dependent selective hydroxylation of L-ectoine to yield (4S,5S)-5-hydroxyectoine.</text>
</comment>
<comment type="catalytic activity">
    <reaction evidence="3">
        <text>L-ectoine + 2-oxoglutarate + O2 = 5-hydroxyectoine + succinate + CO2</text>
        <dbReference type="Rhea" id="RHEA:45740"/>
        <dbReference type="ChEBI" id="CHEBI:15379"/>
        <dbReference type="ChEBI" id="CHEBI:16526"/>
        <dbReference type="ChEBI" id="CHEBI:16810"/>
        <dbReference type="ChEBI" id="CHEBI:30031"/>
        <dbReference type="ChEBI" id="CHEBI:58515"/>
        <dbReference type="ChEBI" id="CHEBI:85413"/>
        <dbReference type="EC" id="1.14.11.55"/>
    </reaction>
</comment>
<comment type="cofactor">
    <cofactor evidence="2">
        <name>Fe(2+)</name>
        <dbReference type="ChEBI" id="CHEBI:29033"/>
    </cofactor>
    <text evidence="2">Binds 1 Fe(2+) ion.</text>
</comment>
<comment type="subunit">
    <text evidence="2">Homodimer.</text>
</comment>
<comment type="similarity">
    <text evidence="3">Belongs to the PhyH family. EctD subfamily.</text>
</comment>
<dbReference type="EC" id="1.14.11.55" evidence="3"/>
<dbReference type="EMBL" id="BA000030">
    <property type="protein sequence ID" value="BAC74106.2"/>
    <property type="molecule type" value="Genomic_DNA"/>
</dbReference>
<dbReference type="SMR" id="Q829L6"/>
<dbReference type="GeneID" id="41543469"/>
<dbReference type="KEGG" id="sma:SAVERM_6395"/>
<dbReference type="eggNOG" id="COG5285">
    <property type="taxonomic scope" value="Bacteria"/>
</dbReference>
<dbReference type="HOGENOM" id="CLU_048953_5_0_11"/>
<dbReference type="OrthoDB" id="2573519at2"/>
<dbReference type="Proteomes" id="UP000000428">
    <property type="component" value="Chromosome"/>
</dbReference>
<dbReference type="GO" id="GO:0016706">
    <property type="term" value="F:2-oxoglutarate-dependent dioxygenase activity"/>
    <property type="evidence" value="ECO:0000250"/>
    <property type="project" value="UniProtKB"/>
</dbReference>
<dbReference type="GO" id="GO:0005506">
    <property type="term" value="F:iron ion binding"/>
    <property type="evidence" value="ECO:0000250"/>
    <property type="project" value="UniProtKB"/>
</dbReference>
<dbReference type="GO" id="GO:0042400">
    <property type="term" value="P:ectoine catabolic process"/>
    <property type="evidence" value="ECO:0000250"/>
    <property type="project" value="UniProtKB"/>
</dbReference>
<dbReference type="FunFam" id="2.60.120.620:FF:000016">
    <property type="entry name" value="Ectoine hydroxylase"/>
    <property type="match status" value="1"/>
</dbReference>
<dbReference type="Gene3D" id="2.60.120.620">
    <property type="entry name" value="q2cbj1_9rhob like domain"/>
    <property type="match status" value="1"/>
</dbReference>
<dbReference type="InterPro" id="IPR012774">
    <property type="entry name" value="EctD"/>
</dbReference>
<dbReference type="InterPro" id="IPR008775">
    <property type="entry name" value="Phytyl_CoA_dOase-like"/>
</dbReference>
<dbReference type="NCBIfam" id="TIGR02408">
    <property type="entry name" value="ectoine_ThpD"/>
    <property type="match status" value="1"/>
</dbReference>
<dbReference type="PANTHER" id="PTHR20883:SF48">
    <property type="entry name" value="ECTOINE DIOXYGENASE"/>
    <property type="match status" value="1"/>
</dbReference>
<dbReference type="PANTHER" id="PTHR20883">
    <property type="entry name" value="PHYTANOYL-COA DIOXYGENASE DOMAIN CONTAINING 1"/>
    <property type="match status" value="1"/>
</dbReference>
<dbReference type="Pfam" id="PF05721">
    <property type="entry name" value="PhyH"/>
    <property type="match status" value="1"/>
</dbReference>
<dbReference type="SUPFAM" id="SSF51197">
    <property type="entry name" value="Clavaminate synthase-like"/>
    <property type="match status" value="1"/>
</dbReference>
<accession>Q829L6</accession>
<proteinExistence type="inferred from homology"/>
<evidence type="ECO:0000250" key="1">
    <source>
        <dbReference type="UniProtKB" id="Q1GNW5"/>
    </source>
</evidence>
<evidence type="ECO:0000250" key="2">
    <source>
        <dbReference type="UniProtKB" id="Q2TDY4"/>
    </source>
</evidence>
<evidence type="ECO:0000250" key="3">
    <source>
        <dbReference type="UniProtKB" id="Q93RV9"/>
    </source>
</evidence>
<feature type="chain" id="PRO_0000215241" description="Ectoine dioxygenase">
    <location>
        <begin position="1"/>
        <end position="295"/>
    </location>
</feature>
<feature type="binding site" evidence="1">
    <location>
        <position position="129"/>
    </location>
    <ligand>
        <name>L-ectoine</name>
        <dbReference type="ChEBI" id="CHEBI:58515"/>
    </ligand>
</feature>
<feature type="binding site" evidence="1">
    <location>
        <position position="135"/>
    </location>
    <ligand>
        <name>2-oxoglutarate</name>
        <dbReference type="ChEBI" id="CHEBI:16810"/>
    </ligand>
</feature>
<feature type="binding site" evidence="2">
    <location>
        <position position="146"/>
    </location>
    <ligand>
        <name>Fe cation</name>
        <dbReference type="ChEBI" id="CHEBI:24875"/>
    </ligand>
</feature>
<feature type="binding site" evidence="2">
    <location>
        <position position="148"/>
    </location>
    <ligand>
        <name>Fe cation</name>
        <dbReference type="ChEBI" id="CHEBI:24875"/>
    </ligand>
</feature>
<feature type="binding site" evidence="2">
    <location>
        <position position="247"/>
    </location>
    <ligand>
        <name>Fe cation</name>
        <dbReference type="ChEBI" id="CHEBI:24875"/>
    </ligand>
</feature>
<feature type="site" description="Important for ectoine stabilization" evidence="1">
    <location>
        <position position="152"/>
    </location>
</feature>
<organism>
    <name type="scientific">Streptomyces avermitilis (strain ATCC 31267 / DSM 46492 / JCM 5070 / NBRC 14893 / NCIMB 12804 / NRRL 8165 / MA-4680)</name>
    <dbReference type="NCBI Taxonomy" id="227882"/>
    <lineage>
        <taxon>Bacteria</taxon>
        <taxon>Bacillati</taxon>
        <taxon>Actinomycetota</taxon>
        <taxon>Actinomycetes</taxon>
        <taxon>Kitasatosporales</taxon>
        <taxon>Streptomycetaceae</taxon>
        <taxon>Streptomyces</taxon>
    </lineage>
</organism>
<gene>
    <name evidence="3" type="primary">ectD</name>
    <name type="ordered locus">SAV_6395</name>
</gene>
<reference key="1">
    <citation type="journal article" date="2001" name="Proc. Natl. Acad. Sci. U.S.A.">
        <title>Genome sequence of an industrial microorganism Streptomyces avermitilis: deducing the ability of producing secondary metabolites.</title>
        <authorList>
            <person name="Omura S."/>
            <person name="Ikeda H."/>
            <person name="Ishikawa J."/>
            <person name="Hanamoto A."/>
            <person name="Takahashi C."/>
            <person name="Shinose M."/>
            <person name="Takahashi Y."/>
            <person name="Horikawa H."/>
            <person name="Nakazawa H."/>
            <person name="Osonoe T."/>
            <person name="Kikuchi H."/>
            <person name="Shiba T."/>
            <person name="Sakaki Y."/>
            <person name="Hattori M."/>
        </authorList>
    </citation>
    <scope>NUCLEOTIDE SEQUENCE [LARGE SCALE GENOMIC DNA]</scope>
    <source>
        <strain>ATCC 31267 / DSM 46492 / JCM 5070 / NBRC 14893 / NCIMB 12804 / NRRL 8165 / MA-4680</strain>
    </source>
</reference>
<reference key="2">
    <citation type="journal article" date="2003" name="Nat. Biotechnol.">
        <title>Complete genome sequence and comparative analysis of the industrial microorganism Streptomyces avermitilis.</title>
        <authorList>
            <person name="Ikeda H."/>
            <person name="Ishikawa J."/>
            <person name="Hanamoto A."/>
            <person name="Shinose M."/>
            <person name="Kikuchi H."/>
            <person name="Shiba T."/>
            <person name="Sakaki Y."/>
            <person name="Hattori M."/>
            <person name="Omura S."/>
        </authorList>
    </citation>
    <scope>NUCLEOTIDE SEQUENCE [LARGE SCALE GENOMIC DNA]</scope>
    <source>
        <strain>ATCC 31267 / DSM 46492 / JCM 5070 / NBRC 14893 / NCIMB 12804 / NRRL 8165 / MA-4680</strain>
    </source>
</reference>
<sequence length="295" mass="32618">MTTITDLYPSRGAAEVSVPRQDPVLWGTPDTPGPITAADLQSYEHDGFLAVPQLIGDDEVALYHAELERLIHDPAVRADERSIVEPQSQEIRSVFEVHKISEIFAQLVRDERVVGRARQILGSDVYVHQSRINVKPGFGASGFYWHSDFETWHAEDGLPNMRTVSVSIALTENYDTNGGLMIMPGSHKTFLGCAGATPKDNYKKSLQMQDAGTPSDEALTKFADRHGIRLFTGRAGSATWFDCNCLHGSGDNITPFPRSNVFIVFNSVENTAVEPFSAPVRRPEFIGARDFTPVR</sequence>
<protein>
    <recommendedName>
        <fullName evidence="3">Ectoine dioxygenase</fullName>
        <ecNumber evidence="3">1.14.11.55</ecNumber>
    </recommendedName>
    <alternativeName>
        <fullName evidence="3">Ectoine hydroxylase</fullName>
    </alternativeName>
</protein>